<keyword id="KW-0963">Cytoplasm</keyword>
<keyword id="KW-0489">Methyltransferase</keyword>
<keyword id="KW-0949">S-adenosyl-L-methionine</keyword>
<keyword id="KW-0808">Transferase</keyword>
<sequence length="300" mass="32498">MSYRELVVELAREHAEALSDALLDLGALSVSVEDADADTPDEQPLFGEPGLVPDRTAWQHSRVVALLSADHEPAVLLAAAANEIGLAETPKFVVREVEEQDWVRLTQSQFEPIPIGERIWVVPSWHDAPDPDALVLELDPGLAFGTGSHPTTRLCMEWLEQSVKPGQSVLDYGCGSGILAILAKKCGANPVIGIDIDPQAVESARQNSERNRAEVTYGLPDACPEGEFDIVVANILSNPLKLMASMLASKVKPGGRIALSGVLARQADEVAAVYARYVDISVWREHEGWVCLAGTRRESH</sequence>
<dbReference type="EC" id="2.1.1.-" evidence="1"/>
<dbReference type="EMBL" id="CP000958">
    <property type="protein sequence ID" value="ACA89750.1"/>
    <property type="molecule type" value="Genomic_DNA"/>
</dbReference>
<dbReference type="RefSeq" id="WP_012327874.1">
    <property type="nucleotide sequence ID" value="NC_010508.1"/>
</dbReference>
<dbReference type="SMR" id="B1JVC0"/>
<dbReference type="GeneID" id="83047372"/>
<dbReference type="KEGG" id="bcm:Bcenmc03_0572"/>
<dbReference type="HOGENOM" id="CLU_049382_4_1_4"/>
<dbReference type="Proteomes" id="UP000002169">
    <property type="component" value="Chromosome 1"/>
</dbReference>
<dbReference type="GO" id="GO:0005829">
    <property type="term" value="C:cytosol"/>
    <property type="evidence" value="ECO:0007669"/>
    <property type="project" value="TreeGrafter"/>
</dbReference>
<dbReference type="GO" id="GO:0016279">
    <property type="term" value="F:protein-lysine N-methyltransferase activity"/>
    <property type="evidence" value="ECO:0007669"/>
    <property type="project" value="TreeGrafter"/>
</dbReference>
<dbReference type="GO" id="GO:0032259">
    <property type="term" value="P:methylation"/>
    <property type="evidence" value="ECO:0007669"/>
    <property type="project" value="UniProtKB-KW"/>
</dbReference>
<dbReference type="CDD" id="cd02440">
    <property type="entry name" value="AdoMet_MTases"/>
    <property type="match status" value="1"/>
</dbReference>
<dbReference type="Gene3D" id="3.40.50.150">
    <property type="entry name" value="Vaccinia Virus protein VP39"/>
    <property type="match status" value="1"/>
</dbReference>
<dbReference type="HAMAP" id="MF_00735">
    <property type="entry name" value="Methyltr_PrmA"/>
    <property type="match status" value="1"/>
</dbReference>
<dbReference type="InterPro" id="IPR050078">
    <property type="entry name" value="Ribosomal_L11_MeTrfase_PrmA"/>
</dbReference>
<dbReference type="InterPro" id="IPR004498">
    <property type="entry name" value="Ribosomal_PrmA_MeTrfase"/>
</dbReference>
<dbReference type="InterPro" id="IPR029063">
    <property type="entry name" value="SAM-dependent_MTases_sf"/>
</dbReference>
<dbReference type="NCBIfam" id="TIGR00406">
    <property type="entry name" value="prmA"/>
    <property type="match status" value="1"/>
</dbReference>
<dbReference type="PANTHER" id="PTHR43648">
    <property type="entry name" value="ELECTRON TRANSFER FLAVOPROTEIN BETA SUBUNIT LYSINE METHYLTRANSFERASE"/>
    <property type="match status" value="1"/>
</dbReference>
<dbReference type="PANTHER" id="PTHR43648:SF1">
    <property type="entry name" value="ELECTRON TRANSFER FLAVOPROTEIN BETA SUBUNIT LYSINE METHYLTRANSFERASE"/>
    <property type="match status" value="1"/>
</dbReference>
<dbReference type="Pfam" id="PF06325">
    <property type="entry name" value="PrmA"/>
    <property type="match status" value="1"/>
</dbReference>
<dbReference type="PIRSF" id="PIRSF000401">
    <property type="entry name" value="RPL11_MTase"/>
    <property type="match status" value="1"/>
</dbReference>
<dbReference type="SUPFAM" id="SSF53335">
    <property type="entry name" value="S-adenosyl-L-methionine-dependent methyltransferases"/>
    <property type="match status" value="1"/>
</dbReference>
<reference key="1">
    <citation type="submission" date="2008-02" db="EMBL/GenBank/DDBJ databases">
        <title>Complete sequence of chromosome 1 of Burkholderia cenocepacia MC0-3.</title>
        <authorList>
            <person name="Copeland A."/>
            <person name="Lucas S."/>
            <person name="Lapidus A."/>
            <person name="Barry K."/>
            <person name="Bruce D."/>
            <person name="Goodwin L."/>
            <person name="Glavina del Rio T."/>
            <person name="Dalin E."/>
            <person name="Tice H."/>
            <person name="Pitluck S."/>
            <person name="Chain P."/>
            <person name="Malfatti S."/>
            <person name="Shin M."/>
            <person name="Vergez L."/>
            <person name="Schmutz J."/>
            <person name="Larimer F."/>
            <person name="Land M."/>
            <person name="Hauser L."/>
            <person name="Kyrpides N."/>
            <person name="Mikhailova N."/>
            <person name="Tiedje J."/>
            <person name="Richardson P."/>
        </authorList>
    </citation>
    <scope>NUCLEOTIDE SEQUENCE [LARGE SCALE GENOMIC DNA]</scope>
    <source>
        <strain>MC0-3</strain>
    </source>
</reference>
<protein>
    <recommendedName>
        <fullName evidence="1">Ribosomal protein L11 methyltransferase</fullName>
        <shortName evidence="1">L11 Mtase</shortName>
        <ecNumber evidence="1">2.1.1.-</ecNumber>
    </recommendedName>
</protein>
<gene>
    <name evidence="1" type="primary">prmA</name>
    <name type="ordered locus">Bcenmc03_0572</name>
</gene>
<name>PRMA_BURO0</name>
<evidence type="ECO:0000255" key="1">
    <source>
        <dbReference type="HAMAP-Rule" id="MF_00735"/>
    </source>
</evidence>
<organism>
    <name type="scientific">Burkholderia orbicola (strain MC0-3)</name>
    <dbReference type="NCBI Taxonomy" id="406425"/>
    <lineage>
        <taxon>Bacteria</taxon>
        <taxon>Pseudomonadati</taxon>
        <taxon>Pseudomonadota</taxon>
        <taxon>Betaproteobacteria</taxon>
        <taxon>Burkholderiales</taxon>
        <taxon>Burkholderiaceae</taxon>
        <taxon>Burkholderia</taxon>
        <taxon>Burkholderia cepacia complex</taxon>
        <taxon>Burkholderia orbicola</taxon>
    </lineage>
</organism>
<proteinExistence type="inferred from homology"/>
<comment type="function">
    <text evidence="1">Methylates ribosomal protein L11.</text>
</comment>
<comment type="catalytic activity">
    <reaction evidence="1">
        <text>L-lysyl-[protein] + 3 S-adenosyl-L-methionine = N(6),N(6),N(6)-trimethyl-L-lysyl-[protein] + 3 S-adenosyl-L-homocysteine + 3 H(+)</text>
        <dbReference type="Rhea" id="RHEA:54192"/>
        <dbReference type="Rhea" id="RHEA-COMP:9752"/>
        <dbReference type="Rhea" id="RHEA-COMP:13826"/>
        <dbReference type="ChEBI" id="CHEBI:15378"/>
        <dbReference type="ChEBI" id="CHEBI:29969"/>
        <dbReference type="ChEBI" id="CHEBI:57856"/>
        <dbReference type="ChEBI" id="CHEBI:59789"/>
        <dbReference type="ChEBI" id="CHEBI:61961"/>
    </reaction>
</comment>
<comment type="subcellular location">
    <subcellularLocation>
        <location evidence="1">Cytoplasm</location>
    </subcellularLocation>
</comment>
<comment type="similarity">
    <text evidence="1">Belongs to the methyltransferase superfamily. PrmA family.</text>
</comment>
<accession>B1JVC0</accession>
<feature type="chain" id="PRO_1000192590" description="Ribosomal protein L11 methyltransferase">
    <location>
        <begin position="1"/>
        <end position="300"/>
    </location>
</feature>
<feature type="binding site" evidence="1">
    <location>
        <position position="152"/>
    </location>
    <ligand>
        <name>S-adenosyl-L-methionine</name>
        <dbReference type="ChEBI" id="CHEBI:59789"/>
    </ligand>
</feature>
<feature type="binding site" evidence="1">
    <location>
        <position position="173"/>
    </location>
    <ligand>
        <name>S-adenosyl-L-methionine</name>
        <dbReference type="ChEBI" id="CHEBI:59789"/>
    </ligand>
</feature>
<feature type="binding site" evidence="1">
    <location>
        <position position="195"/>
    </location>
    <ligand>
        <name>S-adenosyl-L-methionine</name>
        <dbReference type="ChEBI" id="CHEBI:59789"/>
    </ligand>
</feature>
<feature type="binding site" evidence="1">
    <location>
        <position position="234"/>
    </location>
    <ligand>
        <name>S-adenosyl-L-methionine</name>
        <dbReference type="ChEBI" id="CHEBI:59789"/>
    </ligand>
</feature>